<feature type="chain" id="PRO_0000358836" description="Transcription factor MYB113">
    <location>
        <begin position="1"/>
        <end position="246"/>
    </location>
</feature>
<feature type="domain" description="HTH myb-type 1" evidence="1">
    <location>
        <begin position="5"/>
        <end position="61"/>
    </location>
</feature>
<feature type="domain" description="HTH myb-type 2" evidence="1">
    <location>
        <begin position="62"/>
        <end position="112"/>
    </location>
</feature>
<feature type="DNA-binding region" description="H-T-H motif" evidence="1">
    <location>
        <begin position="33"/>
        <end position="57"/>
    </location>
</feature>
<feature type="DNA-binding region" description="H-T-H motif" evidence="1">
    <location>
        <begin position="85"/>
        <end position="108"/>
    </location>
</feature>
<keyword id="KW-0010">Activator</keyword>
<keyword id="KW-0217">Developmental protein</keyword>
<keyword id="KW-0238">DNA-binding</keyword>
<keyword id="KW-0539">Nucleus</keyword>
<keyword id="KW-1185">Reference proteome</keyword>
<keyword id="KW-0677">Repeat</keyword>
<keyword id="KW-0804">Transcription</keyword>
<keyword id="KW-0805">Transcription regulation</keyword>
<protein>
    <recommendedName>
        <fullName>Transcription factor MYB113</fullName>
    </recommendedName>
    <alternativeName>
        <fullName>Myb-related protein 113</fullName>
        <shortName>AtMYB113</shortName>
    </alternativeName>
</protein>
<organism>
    <name type="scientific">Arabidopsis thaliana</name>
    <name type="common">Mouse-ear cress</name>
    <dbReference type="NCBI Taxonomy" id="3702"/>
    <lineage>
        <taxon>Eukaryota</taxon>
        <taxon>Viridiplantae</taxon>
        <taxon>Streptophyta</taxon>
        <taxon>Embryophyta</taxon>
        <taxon>Tracheophyta</taxon>
        <taxon>Spermatophyta</taxon>
        <taxon>Magnoliopsida</taxon>
        <taxon>eudicotyledons</taxon>
        <taxon>Gunneridae</taxon>
        <taxon>Pentapetalae</taxon>
        <taxon>rosids</taxon>
        <taxon>malvids</taxon>
        <taxon>Brassicales</taxon>
        <taxon>Brassicaceae</taxon>
        <taxon>Camelineae</taxon>
        <taxon>Arabidopsis</taxon>
    </lineage>
</organism>
<gene>
    <name type="primary">MYB113</name>
    <name type="ordered locus">At1g66370</name>
    <name type="ORF">T27F4.12</name>
</gene>
<reference key="1">
    <citation type="journal article" date="2001" name="Curr. Opin. Plant Biol.">
        <title>The R2R3-MYB gene family in Arabidopsis thaliana.</title>
        <authorList>
            <person name="Stracke R."/>
            <person name="Werber M."/>
            <person name="Weisshaar B."/>
        </authorList>
    </citation>
    <scope>NUCLEOTIDE SEQUENCE [MRNA]</scope>
    <scope>GENE FAMILY</scope>
    <scope>NOMENCLATURE</scope>
</reference>
<reference key="2">
    <citation type="submission" date="2004-01" db="EMBL/GenBank/DDBJ databases">
        <title>The MYB transcription factor family in Arabidopsis: a genome-wide cloning and expression pattern analysis.</title>
        <authorList>
            <person name="Qu L.-J."/>
            <person name="Gu H."/>
        </authorList>
    </citation>
    <scope>NUCLEOTIDE SEQUENCE [MRNA]</scope>
</reference>
<reference key="3">
    <citation type="journal article" date="2000" name="Nature">
        <title>Sequence and analysis of chromosome 1 of the plant Arabidopsis thaliana.</title>
        <authorList>
            <person name="Theologis A."/>
            <person name="Ecker J.R."/>
            <person name="Palm C.J."/>
            <person name="Federspiel N.A."/>
            <person name="Kaul S."/>
            <person name="White O."/>
            <person name="Alonso J."/>
            <person name="Altafi H."/>
            <person name="Araujo R."/>
            <person name="Bowman C.L."/>
            <person name="Brooks S.Y."/>
            <person name="Buehler E."/>
            <person name="Chan A."/>
            <person name="Chao Q."/>
            <person name="Chen H."/>
            <person name="Cheuk R.F."/>
            <person name="Chin C.W."/>
            <person name="Chung M.K."/>
            <person name="Conn L."/>
            <person name="Conway A.B."/>
            <person name="Conway A.R."/>
            <person name="Creasy T.H."/>
            <person name="Dewar K."/>
            <person name="Dunn P."/>
            <person name="Etgu P."/>
            <person name="Feldblyum T.V."/>
            <person name="Feng J.-D."/>
            <person name="Fong B."/>
            <person name="Fujii C.Y."/>
            <person name="Gill J.E."/>
            <person name="Goldsmith A.D."/>
            <person name="Haas B."/>
            <person name="Hansen N.F."/>
            <person name="Hughes B."/>
            <person name="Huizar L."/>
            <person name="Hunter J.L."/>
            <person name="Jenkins J."/>
            <person name="Johnson-Hopson C."/>
            <person name="Khan S."/>
            <person name="Khaykin E."/>
            <person name="Kim C.J."/>
            <person name="Koo H.L."/>
            <person name="Kremenetskaia I."/>
            <person name="Kurtz D.B."/>
            <person name="Kwan A."/>
            <person name="Lam B."/>
            <person name="Langin-Hooper S."/>
            <person name="Lee A."/>
            <person name="Lee J.M."/>
            <person name="Lenz C.A."/>
            <person name="Li J.H."/>
            <person name="Li Y.-P."/>
            <person name="Lin X."/>
            <person name="Liu S.X."/>
            <person name="Liu Z.A."/>
            <person name="Luros J.S."/>
            <person name="Maiti R."/>
            <person name="Marziali A."/>
            <person name="Militscher J."/>
            <person name="Miranda M."/>
            <person name="Nguyen M."/>
            <person name="Nierman W.C."/>
            <person name="Osborne B.I."/>
            <person name="Pai G."/>
            <person name="Peterson J."/>
            <person name="Pham P.K."/>
            <person name="Rizzo M."/>
            <person name="Rooney T."/>
            <person name="Rowley D."/>
            <person name="Sakano H."/>
            <person name="Salzberg S.L."/>
            <person name="Schwartz J.R."/>
            <person name="Shinn P."/>
            <person name="Southwick A.M."/>
            <person name="Sun H."/>
            <person name="Tallon L.J."/>
            <person name="Tambunga G."/>
            <person name="Toriumi M.J."/>
            <person name="Town C.D."/>
            <person name="Utterback T."/>
            <person name="Van Aken S."/>
            <person name="Vaysberg M."/>
            <person name="Vysotskaia V.S."/>
            <person name="Walker M."/>
            <person name="Wu D."/>
            <person name="Yu G."/>
            <person name="Fraser C.M."/>
            <person name="Venter J.C."/>
            <person name="Davis R.W."/>
        </authorList>
    </citation>
    <scope>NUCLEOTIDE SEQUENCE [LARGE SCALE GENOMIC DNA]</scope>
    <source>
        <strain>cv. Columbia</strain>
    </source>
</reference>
<reference key="4">
    <citation type="journal article" date="2017" name="Plant J.">
        <title>Araport11: a complete reannotation of the Arabidopsis thaliana reference genome.</title>
        <authorList>
            <person name="Cheng C.Y."/>
            <person name="Krishnakumar V."/>
            <person name="Chan A.P."/>
            <person name="Thibaud-Nissen F."/>
            <person name="Schobel S."/>
            <person name="Town C.D."/>
        </authorList>
    </citation>
    <scope>GENOME REANNOTATION</scope>
    <source>
        <strain>cv. Columbia</strain>
    </source>
</reference>
<reference key="5">
    <citation type="journal article" date="2004" name="Plant J.">
        <title>Comprehensive identification of Arabidopsis thaliana MYB transcription factors interacting with R/B-like BHLH proteins.</title>
        <authorList>
            <person name="Zimmermann I.M."/>
            <person name="Heim M.A."/>
            <person name="Weisshaar B."/>
            <person name="Uhrig J.F."/>
        </authorList>
    </citation>
    <scope>FUNCTION</scope>
    <scope>INTERACTION WITH BHLH002; BHLH012 AND BHLH042</scope>
</reference>
<reference key="6">
    <citation type="journal article" date="2006" name="Plant Mol. Biol.">
        <title>The MYB transcription factor superfamily of Arabidopsis: expression analysis and phylogenetic comparison with the rice MYB family.</title>
        <authorList>
            <person name="Chen Y."/>
            <person name="Yang X."/>
            <person name="He K."/>
            <person name="Liu M."/>
            <person name="Li J."/>
            <person name="Gao Z."/>
            <person name="Lin Z."/>
            <person name="Zhang Y."/>
            <person name="Wang X."/>
            <person name="Qiu X."/>
            <person name="Shen Y."/>
            <person name="Zhang L."/>
            <person name="Deng X."/>
            <person name="Luo J."/>
            <person name="Deng X.-W."/>
            <person name="Chen Z."/>
            <person name="Gu H."/>
            <person name="Qu L.-J."/>
        </authorList>
    </citation>
    <scope>GENE FAMILY</scope>
</reference>
<accession>Q9FNV9</accession>
<evidence type="ECO:0000255" key="1">
    <source>
        <dbReference type="PROSITE-ProRule" id="PRU00625"/>
    </source>
</evidence>
<evidence type="ECO:0000269" key="2">
    <source>
    </source>
</evidence>
<dbReference type="EMBL" id="AY008378">
    <property type="protein sequence ID" value="AAG38380.1"/>
    <property type="molecule type" value="mRNA"/>
</dbReference>
<dbReference type="EMBL" id="AY519566">
    <property type="protein sequence ID" value="AAS10036.1"/>
    <property type="molecule type" value="mRNA"/>
</dbReference>
<dbReference type="EMBL" id="AC020665">
    <property type="protein sequence ID" value="AAG52158.1"/>
    <property type="molecule type" value="Genomic_DNA"/>
</dbReference>
<dbReference type="EMBL" id="CP002684">
    <property type="protein sequence ID" value="AEE34501.1"/>
    <property type="molecule type" value="Genomic_DNA"/>
</dbReference>
<dbReference type="PIR" id="A96689">
    <property type="entry name" value="A96689"/>
</dbReference>
<dbReference type="RefSeq" id="NP_176811.1">
    <property type="nucleotide sequence ID" value="NM_105308.2"/>
</dbReference>
<dbReference type="SMR" id="Q9FNV9"/>
<dbReference type="BioGRID" id="28176">
    <property type="interactions" value="10"/>
</dbReference>
<dbReference type="IntAct" id="Q9FNV9">
    <property type="interactions" value="6"/>
</dbReference>
<dbReference type="STRING" id="3702.Q9FNV9"/>
<dbReference type="PaxDb" id="3702-AT1G66370.1"/>
<dbReference type="EnsemblPlants" id="AT1G66370.1">
    <property type="protein sequence ID" value="AT1G66370.1"/>
    <property type="gene ID" value="AT1G66370"/>
</dbReference>
<dbReference type="GeneID" id="842955"/>
<dbReference type="Gramene" id="AT1G66370.1">
    <property type="protein sequence ID" value="AT1G66370.1"/>
    <property type="gene ID" value="AT1G66370"/>
</dbReference>
<dbReference type="KEGG" id="ath:AT1G66370"/>
<dbReference type="Araport" id="AT1G66370"/>
<dbReference type="TAIR" id="AT1G66370">
    <property type="gene designation" value="MYB113"/>
</dbReference>
<dbReference type="eggNOG" id="KOG0048">
    <property type="taxonomic scope" value="Eukaryota"/>
</dbReference>
<dbReference type="HOGENOM" id="CLU_028567_6_4_1"/>
<dbReference type="InParanoid" id="Q9FNV9"/>
<dbReference type="OMA" id="DKNSCND"/>
<dbReference type="PhylomeDB" id="Q9FNV9"/>
<dbReference type="PRO" id="PR:Q9FNV9"/>
<dbReference type="Proteomes" id="UP000006548">
    <property type="component" value="Chromosome 1"/>
</dbReference>
<dbReference type="ExpressionAtlas" id="Q9FNV9">
    <property type="expression patterns" value="baseline and differential"/>
</dbReference>
<dbReference type="GO" id="GO:0005634">
    <property type="term" value="C:nucleus"/>
    <property type="evidence" value="ECO:0007669"/>
    <property type="project" value="UniProtKB-SubCell"/>
</dbReference>
<dbReference type="GO" id="GO:0003677">
    <property type="term" value="F:DNA binding"/>
    <property type="evidence" value="ECO:0007669"/>
    <property type="project" value="UniProtKB-KW"/>
</dbReference>
<dbReference type="GO" id="GO:0003700">
    <property type="term" value="F:DNA-binding transcription factor activity"/>
    <property type="evidence" value="ECO:0000250"/>
    <property type="project" value="TAIR"/>
</dbReference>
<dbReference type="GO" id="GO:0031540">
    <property type="term" value="P:regulation of anthocyanin biosynthetic process"/>
    <property type="evidence" value="ECO:0000315"/>
    <property type="project" value="TAIR"/>
</dbReference>
<dbReference type="GO" id="GO:0006355">
    <property type="term" value="P:regulation of DNA-templated transcription"/>
    <property type="evidence" value="ECO:0000304"/>
    <property type="project" value="TAIR"/>
</dbReference>
<dbReference type="CDD" id="cd00167">
    <property type="entry name" value="SANT"/>
    <property type="match status" value="2"/>
</dbReference>
<dbReference type="FunFam" id="1.10.10.60:FF:000218">
    <property type="entry name" value="Myb transcription factor"/>
    <property type="match status" value="1"/>
</dbReference>
<dbReference type="FunFam" id="1.10.10.60:FF:000561">
    <property type="entry name" value="Transcription factor MYB75"/>
    <property type="match status" value="1"/>
</dbReference>
<dbReference type="Gene3D" id="1.10.10.60">
    <property type="entry name" value="Homeodomain-like"/>
    <property type="match status" value="2"/>
</dbReference>
<dbReference type="InterPro" id="IPR009057">
    <property type="entry name" value="Homeodomain-like_sf"/>
</dbReference>
<dbReference type="InterPro" id="IPR017930">
    <property type="entry name" value="Myb_dom"/>
</dbReference>
<dbReference type="InterPro" id="IPR015495">
    <property type="entry name" value="Myb_TF_plants"/>
</dbReference>
<dbReference type="InterPro" id="IPR001005">
    <property type="entry name" value="SANT/Myb"/>
</dbReference>
<dbReference type="PANTHER" id="PTHR47999:SF93">
    <property type="entry name" value="TRANSCRIPTION FACTOR MYB113-RELATED"/>
    <property type="match status" value="1"/>
</dbReference>
<dbReference type="PANTHER" id="PTHR47999">
    <property type="entry name" value="TRANSCRIPTION FACTOR MYB8-RELATED-RELATED"/>
    <property type="match status" value="1"/>
</dbReference>
<dbReference type="Pfam" id="PF00249">
    <property type="entry name" value="Myb_DNA-binding"/>
    <property type="match status" value="2"/>
</dbReference>
<dbReference type="SMART" id="SM00717">
    <property type="entry name" value="SANT"/>
    <property type="match status" value="2"/>
</dbReference>
<dbReference type="SUPFAM" id="SSF46689">
    <property type="entry name" value="Homeodomain-like"/>
    <property type="match status" value="1"/>
</dbReference>
<dbReference type="PROSITE" id="PS51294">
    <property type="entry name" value="HTH_MYB"/>
    <property type="match status" value="2"/>
</dbReference>
<proteinExistence type="evidence at protein level"/>
<comment type="function">
    <text evidence="2">Transcription activator, when associated with BHLH002/EGL3/MYC146, BHLH012/MYC1, or BHLH042/TT8.</text>
</comment>
<comment type="subunit">
    <text evidence="2">Interacts with BHLH002/EGL3/MYC146, BHLH012/MYC1 and BHLH042/TT8.</text>
</comment>
<comment type="interaction">
    <interactant intactId="EBI-1546246">
        <id>Q9FNV9</id>
    </interactant>
    <interactant intactId="EBI-25522428">
        <id>A0A384KX90</id>
        <label>AXX17_At3g53190</label>
    </interactant>
    <organismsDiffer>false</organismsDiffer>
    <experiments>3</experiments>
</comment>
<comment type="interaction">
    <interactant intactId="EBI-1546246">
        <id>Q9FNV9</id>
    </interactant>
    <interactant intactId="EBI-604427">
        <id>Q9ZU90</id>
        <label>SKIP28</label>
    </interactant>
    <organismsDiffer>false</organismsDiffer>
    <experiments>3</experiments>
</comment>
<comment type="interaction">
    <interactant intactId="EBI-1546246">
        <id>Q9FNV9</id>
    </interactant>
    <interactant intactId="EBI-4452426">
        <id>Q9FEE2</id>
        <label>TON2</label>
    </interactant>
    <organismsDiffer>false</organismsDiffer>
    <experiments>3</experiments>
</comment>
<comment type="subcellular location">
    <subcellularLocation>
        <location evidence="1">Nucleus</location>
    </subcellularLocation>
</comment>
<name>MY113_ARATH</name>
<sequence length="246" mass="28307">MGESPKGLRKGTWTTEEDILLRQCIDKYGEGKWHRVPLRTGLNRCRKSCRLRWLNYLKPSIKRGKLCSDEVDLVLRLHKLLGNRWSLIAGRLPGRTANDVKNYWNTHLSKKHDERCCKTKMINKNITSHPTSSAQKIDVLKPRPRSFSDKNSCNDVNILPKVDVVPLHLGLNNNYVCESSITCNKDEQKDKLININLLDGDNMWWESLLEADVLGPEATETAKGVTLPLDFEQIWARFDEETLELN</sequence>